<protein>
    <recommendedName>
        <fullName evidence="1">DNA repair protein RecO</fullName>
    </recommendedName>
    <alternativeName>
        <fullName evidence="1">Recombination protein O</fullName>
    </alternativeName>
</protein>
<accession>A0Q7A9</accession>
<keyword id="KW-0227">DNA damage</keyword>
<keyword id="KW-0233">DNA recombination</keyword>
<keyword id="KW-0234">DNA repair</keyword>
<proteinExistence type="inferred from homology"/>
<comment type="function">
    <text evidence="1">Involved in DNA repair and RecF pathway recombination.</text>
</comment>
<comment type="similarity">
    <text evidence="1">Belongs to the RecO family.</text>
</comment>
<organism>
    <name type="scientific">Francisella tularensis subsp. novicida (strain U112)</name>
    <dbReference type="NCBI Taxonomy" id="401614"/>
    <lineage>
        <taxon>Bacteria</taxon>
        <taxon>Pseudomonadati</taxon>
        <taxon>Pseudomonadota</taxon>
        <taxon>Gammaproteobacteria</taxon>
        <taxon>Thiotrichales</taxon>
        <taxon>Francisellaceae</taxon>
        <taxon>Francisella</taxon>
    </lineage>
</organism>
<name>RECO_FRATN</name>
<dbReference type="EMBL" id="CP000439">
    <property type="protein sequence ID" value="ABK90124.1"/>
    <property type="molecule type" value="Genomic_DNA"/>
</dbReference>
<dbReference type="RefSeq" id="WP_003039979.1">
    <property type="nucleotide sequence ID" value="NC_008601.1"/>
</dbReference>
<dbReference type="SMR" id="A0Q7A9"/>
<dbReference type="KEGG" id="ftn:FTN_1243"/>
<dbReference type="KEGG" id="ftx:AW25_763"/>
<dbReference type="BioCyc" id="FTUL401614:G1G75-1288-MONOMER"/>
<dbReference type="Proteomes" id="UP000000762">
    <property type="component" value="Chromosome"/>
</dbReference>
<dbReference type="GO" id="GO:0043590">
    <property type="term" value="C:bacterial nucleoid"/>
    <property type="evidence" value="ECO:0007669"/>
    <property type="project" value="TreeGrafter"/>
</dbReference>
<dbReference type="GO" id="GO:0006310">
    <property type="term" value="P:DNA recombination"/>
    <property type="evidence" value="ECO:0007669"/>
    <property type="project" value="UniProtKB-UniRule"/>
</dbReference>
<dbReference type="GO" id="GO:0006302">
    <property type="term" value="P:double-strand break repair"/>
    <property type="evidence" value="ECO:0007669"/>
    <property type="project" value="TreeGrafter"/>
</dbReference>
<dbReference type="Gene3D" id="2.40.50.140">
    <property type="entry name" value="Nucleic acid-binding proteins"/>
    <property type="match status" value="1"/>
</dbReference>
<dbReference type="Gene3D" id="1.20.1440.120">
    <property type="entry name" value="Recombination protein O, C-terminal domain"/>
    <property type="match status" value="1"/>
</dbReference>
<dbReference type="HAMAP" id="MF_00201">
    <property type="entry name" value="RecO"/>
    <property type="match status" value="1"/>
</dbReference>
<dbReference type="InterPro" id="IPR022572">
    <property type="entry name" value="DNA_rep/recomb_RecO_N"/>
</dbReference>
<dbReference type="InterPro" id="IPR012340">
    <property type="entry name" value="NA-bd_OB-fold"/>
</dbReference>
<dbReference type="InterPro" id="IPR003717">
    <property type="entry name" value="RecO"/>
</dbReference>
<dbReference type="InterPro" id="IPR042242">
    <property type="entry name" value="RecO_C"/>
</dbReference>
<dbReference type="NCBIfam" id="TIGR00613">
    <property type="entry name" value="reco"/>
    <property type="match status" value="1"/>
</dbReference>
<dbReference type="PANTHER" id="PTHR33991">
    <property type="entry name" value="DNA REPAIR PROTEIN RECO"/>
    <property type="match status" value="1"/>
</dbReference>
<dbReference type="PANTHER" id="PTHR33991:SF1">
    <property type="entry name" value="DNA REPAIR PROTEIN RECO"/>
    <property type="match status" value="1"/>
</dbReference>
<dbReference type="Pfam" id="PF02565">
    <property type="entry name" value="RecO_C"/>
    <property type="match status" value="1"/>
</dbReference>
<dbReference type="Pfam" id="PF11967">
    <property type="entry name" value="RecO_N"/>
    <property type="match status" value="1"/>
</dbReference>
<dbReference type="SUPFAM" id="SSF50249">
    <property type="entry name" value="Nucleic acid-binding proteins"/>
    <property type="match status" value="1"/>
</dbReference>
<evidence type="ECO:0000255" key="1">
    <source>
        <dbReference type="HAMAP-Rule" id="MF_00201"/>
    </source>
</evidence>
<reference key="1">
    <citation type="journal article" date="2007" name="Genome Biol.">
        <title>Comparison of Francisella tularensis genomes reveals evolutionary events associated with the emergence of human pathogenic strains.</title>
        <authorList>
            <person name="Rohmer L."/>
            <person name="Fong C."/>
            <person name="Abmayr S."/>
            <person name="Wasnick M."/>
            <person name="Larson Freeman T.J."/>
            <person name="Radey M."/>
            <person name="Guina T."/>
            <person name="Svensson K."/>
            <person name="Hayden H.S."/>
            <person name="Jacobs M."/>
            <person name="Gallagher L.A."/>
            <person name="Manoil C."/>
            <person name="Ernst R.K."/>
            <person name="Drees B."/>
            <person name="Buckley D."/>
            <person name="Haugen E."/>
            <person name="Bovee D."/>
            <person name="Zhou Y."/>
            <person name="Chang J."/>
            <person name="Levy R."/>
            <person name="Lim R."/>
            <person name="Gillett W."/>
            <person name="Guenthener D."/>
            <person name="Kang A."/>
            <person name="Shaffer S.A."/>
            <person name="Taylor G."/>
            <person name="Chen J."/>
            <person name="Gallis B."/>
            <person name="D'Argenio D.A."/>
            <person name="Forsman M."/>
            <person name="Olson M.V."/>
            <person name="Goodlett D.R."/>
            <person name="Kaul R."/>
            <person name="Miller S.I."/>
            <person name="Brittnacher M.J."/>
        </authorList>
    </citation>
    <scope>NUCLEOTIDE SEQUENCE [LARGE SCALE GENOMIC DNA]</scope>
    <source>
        <strain>U112</strain>
    </source>
</reference>
<sequence>MQQLYDFYILHQRKYRENSLLVSVFTREFGKLSALIAINKKTTNLYQPLVKLRGQINLAKKADSLSKIYNIEFVESFYQKTYINLLSLQYINELIYLLLNYSHEEDVLFDKYDFILRNIDEANYRYLLRLFELELLNSLGQGIYVDSDIDGMSIQNDCNYIILPNGFRKDFSFAVNSISGSSLKKINQPLSSWSDDDLKAISRVTRVCVDYVLAGKQLKSRKLLVDYLNLKK</sequence>
<gene>
    <name evidence="1" type="primary">recO</name>
    <name type="ordered locus">FTN_1243</name>
</gene>
<feature type="chain" id="PRO_1000193380" description="DNA repair protein RecO">
    <location>
        <begin position="1"/>
        <end position="232"/>
    </location>
</feature>